<geneLocation type="plasmid">
    <name>pSymB</name>
    <name>megaplasmid 2</name>
</geneLocation>
<evidence type="ECO:0000256" key="1">
    <source>
        <dbReference type="SAM" id="MobiDB-lite"/>
    </source>
</evidence>
<evidence type="ECO:0000305" key="2"/>
<proteinExistence type="inferred from homology"/>
<gene>
    <name type="primary">exoO</name>
    <name type="ordered locus">RB1084</name>
    <name type="ORF">SMb20959</name>
</gene>
<organism>
    <name type="scientific">Rhizobium meliloti (strain 1021)</name>
    <name type="common">Ensifer meliloti</name>
    <name type="synonym">Sinorhizobium meliloti</name>
    <dbReference type="NCBI Taxonomy" id="266834"/>
    <lineage>
        <taxon>Bacteria</taxon>
        <taxon>Pseudomonadati</taxon>
        <taxon>Pseudomonadota</taxon>
        <taxon>Alphaproteobacteria</taxon>
        <taxon>Hyphomicrobiales</taxon>
        <taxon>Rhizobiaceae</taxon>
        <taxon>Sinorhizobium/Ensifer group</taxon>
        <taxon>Sinorhizobium</taxon>
    </lineage>
</organism>
<protein>
    <recommendedName>
        <fullName>Succinoglycan biosynthesis protein ExoO</fullName>
        <ecNumber>2.4.-.-</ecNumber>
    </recommendedName>
</protein>
<accession>P33697</accession>
<comment type="function">
    <text>Glycosyltransferase required for the synthesis of succinoglycan (EPS I). Needed for the addition of the fifth sugar (glucose), catalyzes the formation of a beta-1,6 linkage between the fourth and fifth sugar.</text>
</comment>
<comment type="pathway">
    <text>Glycan metabolism; exopolysaccharide biosynthesis.</text>
</comment>
<comment type="subcellular location">
    <subcellularLocation>
        <location>Cytoplasm</location>
    </subcellularLocation>
</comment>
<comment type="similarity">
    <text evidence="2">Belongs to the glycosyltransferase 2 family.</text>
</comment>
<comment type="sequence caution" evidence="2">
    <conflict type="frameshift">
        <sequence resource="EMBL-CDS" id="AAA16044"/>
    </conflict>
</comment>
<name>EXOO_RHIME</name>
<keyword id="KW-0963">Cytoplasm</keyword>
<keyword id="KW-0270">Exopolysaccharide synthesis</keyword>
<keyword id="KW-0328">Glycosyltransferase</keyword>
<keyword id="KW-0614">Plasmid</keyword>
<keyword id="KW-1185">Reference proteome</keyword>
<keyword id="KW-0808">Transferase</keyword>
<reference key="1">
    <citation type="journal article" date="1993" name="J. Bacteriol.">
        <title>Family of glycosyl transferases needed for the synthesis of succinoglycan by Rhizobium meliloti.</title>
        <authorList>
            <person name="Glucksmann M.A."/>
            <person name="Reuber T.L."/>
            <person name="Walker G.C."/>
        </authorList>
    </citation>
    <scope>NUCLEOTIDE SEQUENCE [GENOMIC DNA]</scope>
    <source>
        <strain>1021</strain>
    </source>
</reference>
<reference key="2">
    <citation type="journal article" date="1993" name="Mol. Gen. Genet.">
        <title>Identification and analysis of the Rhizobium meliloti exoAMONP genes involved in exopolysaccharide biosynthesis and mapping of promoters located on the exoHKLAMONP fragment.</title>
        <authorList>
            <person name="Becker A."/>
            <person name="Kleickmann A."/>
            <person name="Keller M."/>
            <person name="Arnold W."/>
            <person name="Puehler A."/>
        </authorList>
    </citation>
    <scope>NUCLEOTIDE SEQUENCE [GENOMIC DNA]</scope>
    <source>
        <strain>RCR2011 / SU47</strain>
    </source>
</reference>
<reference key="3">
    <citation type="journal article" date="2001" name="Proc. Natl. Acad. Sci. U.S.A.">
        <title>The complete sequence of the 1,683-kb pSymB megaplasmid from the N2-fixing endosymbiont Sinorhizobium meliloti.</title>
        <authorList>
            <person name="Finan T.M."/>
            <person name="Weidner S."/>
            <person name="Wong K."/>
            <person name="Buhrmester J."/>
            <person name="Chain P."/>
            <person name="Vorhoelter F.J."/>
            <person name="Hernandez-Lucas I."/>
            <person name="Becker A."/>
            <person name="Cowie A."/>
            <person name="Gouzy J."/>
            <person name="Golding B."/>
            <person name="Puehler A."/>
        </authorList>
    </citation>
    <scope>NUCLEOTIDE SEQUENCE [LARGE SCALE GENOMIC DNA]</scope>
    <source>
        <strain>1021</strain>
    </source>
</reference>
<reference key="4">
    <citation type="journal article" date="2001" name="Science">
        <title>The composite genome of the legume symbiont Sinorhizobium meliloti.</title>
        <authorList>
            <person name="Galibert F."/>
            <person name="Finan T.M."/>
            <person name="Long S.R."/>
            <person name="Puehler A."/>
            <person name="Abola P."/>
            <person name="Ampe F."/>
            <person name="Barloy-Hubler F."/>
            <person name="Barnett M.J."/>
            <person name="Becker A."/>
            <person name="Boistard P."/>
            <person name="Bothe G."/>
            <person name="Boutry M."/>
            <person name="Bowser L."/>
            <person name="Buhrmester J."/>
            <person name="Cadieu E."/>
            <person name="Capela D."/>
            <person name="Chain P."/>
            <person name="Cowie A."/>
            <person name="Davis R.W."/>
            <person name="Dreano S."/>
            <person name="Federspiel N.A."/>
            <person name="Fisher R.F."/>
            <person name="Gloux S."/>
            <person name="Godrie T."/>
            <person name="Goffeau A."/>
            <person name="Golding B."/>
            <person name="Gouzy J."/>
            <person name="Gurjal M."/>
            <person name="Hernandez-Lucas I."/>
            <person name="Hong A."/>
            <person name="Huizar L."/>
            <person name="Hyman R.W."/>
            <person name="Jones T."/>
            <person name="Kahn D."/>
            <person name="Kahn M.L."/>
            <person name="Kalman S."/>
            <person name="Keating D.H."/>
            <person name="Kiss E."/>
            <person name="Komp C."/>
            <person name="Lelaure V."/>
            <person name="Masuy D."/>
            <person name="Palm C."/>
            <person name="Peck M.C."/>
            <person name="Pohl T.M."/>
            <person name="Portetelle D."/>
            <person name="Purnelle B."/>
            <person name="Ramsperger U."/>
            <person name="Surzycki R."/>
            <person name="Thebault P."/>
            <person name="Vandenbol M."/>
            <person name="Vorhoelter F.J."/>
            <person name="Weidner S."/>
            <person name="Wells D.H."/>
            <person name="Wong K."/>
            <person name="Yeh K.-C."/>
            <person name="Batut J."/>
        </authorList>
    </citation>
    <scope>NUCLEOTIDE SEQUENCE [LARGE SCALE GENOMIC DNA]</scope>
    <source>
        <strain>1021</strain>
    </source>
</reference>
<sequence length="348" mass="38132">MNPPAIDKVPDVTFVVAAYNSADTIVRAIESALAQEGVTVEVVVVDDCSADATPALVAAIPDPRVRLIALDRNRGPGGARNAGIGAARGRWIAVLDSDDTVRPDRLRRMIERADAAGAQIAVDNLDVVSLDGRSLRMFSEAELARLPQLTLPAFIESNVLFRSEHNFGYMKPIFERRFLENQQLRFDEALRIGEDYILLASALACGGRCAVEPSAGYIYHIREGSISRVLRLDHIDAMIAADEAFLRRYALDGLAQKMQHRRMRGFREARSFLVLVEQLKKRSLAGALKTALADPFALRHLSMPIAARLRRLAARFVHPSSHSAPRAAPVTAAAERSPLGNDPRISKG</sequence>
<feature type="chain" id="PRO_0000059183" description="Succinoglycan biosynthesis protein ExoO">
    <location>
        <begin position="1"/>
        <end position="348"/>
    </location>
</feature>
<feature type="region of interest" description="Disordered" evidence="1">
    <location>
        <begin position="322"/>
        <end position="348"/>
    </location>
</feature>
<feature type="compositionally biased region" description="Low complexity" evidence="1">
    <location>
        <begin position="324"/>
        <end position="334"/>
    </location>
</feature>
<dbReference type="EC" id="2.4.-.-"/>
<dbReference type="EMBL" id="L20758">
    <property type="protein sequence ID" value="AAA16044.1"/>
    <property type="status" value="ALT_FRAME"/>
    <property type="molecule type" value="Unassigned_DNA"/>
</dbReference>
<dbReference type="EMBL" id="Z22636">
    <property type="protein sequence ID" value="CAA80347.1"/>
    <property type="molecule type" value="Genomic_DNA"/>
</dbReference>
<dbReference type="EMBL" id="AL591985">
    <property type="protein sequence ID" value="CAC49484.1"/>
    <property type="molecule type" value="Genomic_DNA"/>
</dbReference>
<dbReference type="PIR" id="C49348">
    <property type="entry name" value="C49348"/>
</dbReference>
<dbReference type="PIR" id="D95977">
    <property type="entry name" value="D95977"/>
</dbReference>
<dbReference type="PIR" id="S39958">
    <property type="entry name" value="S39958"/>
</dbReference>
<dbReference type="RefSeq" id="NP_437624.1">
    <property type="nucleotide sequence ID" value="NC_003078.1"/>
</dbReference>
<dbReference type="RefSeq" id="WP_010975920.1">
    <property type="nucleotide sequence ID" value="NC_003078.1"/>
</dbReference>
<dbReference type="SMR" id="P33697"/>
<dbReference type="CAZy" id="GT2">
    <property type="family name" value="Glycosyltransferase Family 2"/>
</dbReference>
<dbReference type="EnsemblBacteria" id="CAC49484">
    <property type="protein sequence ID" value="CAC49484"/>
    <property type="gene ID" value="SM_b20959"/>
</dbReference>
<dbReference type="GeneID" id="89577817"/>
<dbReference type="KEGG" id="sme:SM_b20959"/>
<dbReference type="PATRIC" id="fig|266834.11.peg.6012"/>
<dbReference type="eggNOG" id="COG1215">
    <property type="taxonomic scope" value="Bacteria"/>
</dbReference>
<dbReference type="HOGENOM" id="CLU_025996_0_1_5"/>
<dbReference type="OrthoDB" id="5291101at2"/>
<dbReference type="BioCyc" id="MetaCyc:SM_B20959-MONOMER"/>
<dbReference type="UniPathway" id="UPA00631"/>
<dbReference type="Proteomes" id="UP000001976">
    <property type="component" value="Plasmid pSymB"/>
</dbReference>
<dbReference type="GO" id="GO:0005737">
    <property type="term" value="C:cytoplasm"/>
    <property type="evidence" value="ECO:0007669"/>
    <property type="project" value="UniProtKB-SubCell"/>
</dbReference>
<dbReference type="GO" id="GO:0016757">
    <property type="term" value="F:glycosyltransferase activity"/>
    <property type="evidence" value="ECO:0007669"/>
    <property type="project" value="UniProtKB-KW"/>
</dbReference>
<dbReference type="GO" id="GO:0000271">
    <property type="term" value="P:polysaccharide biosynthetic process"/>
    <property type="evidence" value="ECO:0007669"/>
    <property type="project" value="UniProtKB-KW"/>
</dbReference>
<dbReference type="CDD" id="cd00761">
    <property type="entry name" value="Glyco_tranf_GTA_type"/>
    <property type="match status" value="1"/>
</dbReference>
<dbReference type="Gene3D" id="3.90.550.10">
    <property type="entry name" value="Spore Coat Polysaccharide Biosynthesis Protein SpsA, Chain A"/>
    <property type="match status" value="1"/>
</dbReference>
<dbReference type="InterPro" id="IPR001173">
    <property type="entry name" value="Glyco_trans_2-like"/>
</dbReference>
<dbReference type="InterPro" id="IPR050834">
    <property type="entry name" value="Glycosyltransf_2"/>
</dbReference>
<dbReference type="InterPro" id="IPR029044">
    <property type="entry name" value="Nucleotide-diphossugar_trans"/>
</dbReference>
<dbReference type="PANTHER" id="PTHR43685">
    <property type="entry name" value="GLYCOSYLTRANSFERASE"/>
    <property type="match status" value="1"/>
</dbReference>
<dbReference type="PANTHER" id="PTHR43685:SF2">
    <property type="entry name" value="GLYCOSYLTRANSFERASE 2-LIKE DOMAIN-CONTAINING PROTEIN"/>
    <property type="match status" value="1"/>
</dbReference>
<dbReference type="Pfam" id="PF00535">
    <property type="entry name" value="Glycos_transf_2"/>
    <property type="match status" value="1"/>
</dbReference>
<dbReference type="SUPFAM" id="SSF53448">
    <property type="entry name" value="Nucleotide-diphospho-sugar transferases"/>
    <property type="match status" value="1"/>
</dbReference>